<gene>
    <name evidence="1" type="primary">rsmA</name>
    <name evidence="1" type="synonym">ksgA</name>
    <name type="ordered locus">PH1823</name>
</gene>
<feature type="chain" id="PRO_0000101664" description="Probable ribosomal RNA small subunit methyltransferase A">
    <location>
        <begin position="1"/>
        <end position="268"/>
    </location>
</feature>
<feature type="binding site" evidence="1">
    <location>
        <position position="23"/>
    </location>
    <ligand>
        <name>S-adenosyl-L-methionine</name>
        <dbReference type="ChEBI" id="CHEBI:59789"/>
    </ligand>
</feature>
<feature type="binding site" evidence="1">
    <location>
        <position position="25"/>
    </location>
    <ligand>
        <name>S-adenosyl-L-methionine</name>
        <dbReference type="ChEBI" id="CHEBI:59789"/>
    </ligand>
</feature>
<feature type="binding site" evidence="1">
    <location>
        <position position="50"/>
    </location>
    <ligand>
        <name>S-adenosyl-L-methionine</name>
        <dbReference type="ChEBI" id="CHEBI:59789"/>
    </ligand>
</feature>
<feature type="binding site" evidence="1">
    <location>
        <position position="71"/>
    </location>
    <ligand>
        <name>S-adenosyl-L-methionine</name>
        <dbReference type="ChEBI" id="CHEBI:59789"/>
    </ligand>
</feature>
<feature type="binding site" evidence="1">
    <location>
        <position position="95"/>
    </location>
    <ligand>
        <name>S-adenosyl-L-methionine</name>
        <dbReference type="ChEBI" id="CHEBI:59789"/>
    </ligand>
</feature>
<feature type="binding site" evidence="1">
    <location>
        <position position="110"/>
    </location>
    <ligand>
        <name>S-adenosyl-L-methionine</name>
        <dbReference type="ChEBI" id="CHEBI:59789"/>
    </ligand>
</feature>
<feature type="helix" evidence="3">
    <location>
        <begin position="1"/>
        <end position="11"/>
    </location>
</feature>
<feature type="turn" evidence="4">
    <location>
        <begin position="18"/>
        <end position="20"/>
    </location>
</feature>
<feature type="helix" evidence="3">
    <location>
        <begin position="28"/>
        <end position="37"/>
    </location>
</feature>
<feature type="strand" evidence="3">
    <location>
        <begin position="45"/>
        <end position="49"/>
    </location>
</feature>
<feature type="helix" evidence="3">
    <location>
        <begin position="55"/>
        <end position="63"/>
    </location>
</feature>
<feature type="strand" evidence="3">
    <location>
        <begin position="64"/>
        <end position="72"/>
    </location>
</feature>
<feature type="helix" evidence="3">
    <location>
        <begin position="74"/>
        <end position="83"/>
    </location>
</feature>
<feature type="strand" evidence="3">
    <location>
        <begin position="87"/>
        <end position="94"/>
    </location>
</feature>
<feature type="turn" evidence="3">
    <location>
        <begin position="96"/>
        <end position="98"/>
    </location>
</feature>
<feature type="strand" evidence="3">
    <location>
        <begin position="105"/>
        <end position="110"/>
    </location>
</feature>
<feature type="helix" evidence="3">
    <location>
        <begin position="113"/>
        <end position="115"/>
    </location>
</feature>
<feature type="helix" evidence="3">
    <location>
        <begin position="116"/>
        <end position="124"/>
    </location>
</feature>
<feature type="strand" evidence="3">
    <location>
        <begin position="129"/>
        <end position="136"/>
    </location>
</feature>
<feature type="helix" evidence="3">
    <location>
        <begin position="137"/>
        <end position="143"/>
    </location>
</feature>
<feature type="helix" evidence="3">
    <location>
        <begin position="154"/>
        <end position="162"/>
    </location>
</feature>
<feature type="strand" evidence="3">
    <location>
        <begin position="163"/>
        <end position="171"/>
    </location>
</feature>
<feature type="helix" evidence="3">
    <location>
        <begin position="173"/>
        <end position="175"/>
    </location>
</feature>
<feature type="strand" evidence="3">
    <location>
        <begin position="176"/>
        <end position="178"/>
    </location>
</feature>
<feature type="strand" evidence="3">
    <location>
        <begin position="184"/>
        <end position="191"/>
    </location>
</feature>
<feature type="helix" evidence="3">
    <location>
        <begin position="200"/>
        <end position="207"/>
    </location>
</feature>
<feature type="turn" evidence="3">
    <location>
        <begin position="208"/>
        <end position="211"/>
    </location>
</feature>
<feature type="helix" evidence="3">
    <location>
        <begin position="214"/>
        <end position="225"/>
    </location>
</feature>
<feature type="helix" evidence="3">
    <location>
        <begin position="229"/>
        <end position="237"/>
    </location>
</feature>
<feature type="turn" evidence="3">
    <location>
        <begin position="240"/>
        <end position="243"/>
    </location>
</feature>
<feature type="helix" evidence="3">
    <location>
        <begin position="246"/>
        <end position="248"/>
    </location>
</feature>
<feature type="helix" evidence="3">
    <location>
        <begin position="251"/>
        <end position="263"/>
    </location>
</feature>
<evidence type="ECO:0000255" key="1">
    <source>
        <dbReference type="HAMAP-Rule" id="MF_00607"/>
    </source>
</evidence>
<evidence type="ECO:0000305" key="2"/>
<evidence type="ECO:0007829" key="3">
    <source>
        <dbReference type="PDB" id="8X3W"/>
    </source>
</evidence>
<evidence type="ECO:0007829" key="4">
    <source>
        <dbReference type="PDB" id="8X46"/>
    </source>
</evidence>
<organism>
    <name type="scientific">Pyrococcus horikoshii (strain ATCC 700860 / DSM 12428 / JCM 9974 / NBRC 100139 / OT-3)</name>
    <dbReference type="NCBI Taxonomy" id="70601"/>
    <lineage>
        <taxon>Archaea</taxon>
        <taxon>Methanobacteriati</taxon>
        <taxon>Methanobacteriota</taxon>
        <taxon>Thermococci</taxon>
        <taxon>Thermococcales</taxon>
        <taxon>Thermococcaceae</taxon>
        <taxon>Pyrococcus</taxon>
    </lineage>
</organism>
<protein>
    <recommendedName>
        <fullName evidence="1">Probable ribosomal RNA small subunit methyltransferase A</fullName>
        <ecNumber evidence="1">2.1.1.-</ecNumber>
    </recommendedName>
    <alternativeName>
        <fullName evidence="1">16S rRNA dimethyladenosine transferase</fullName>
    </alternativeName>
    <alternativeName>
        <fullName evidence="1">16S rRNA dimethylase</fullName>
    </alternativeName>
    <alternativeName>
        <fullName evidence="1">S-adenosylmethionine-6-N',N'-adenosyl(rRNA) dimethyltransferase</fullName>
    </alternativeName>
</protein>
<accession>O59487</accession>
<comment type="function">
    <text evidence="1">Specifically dimethylates two adjacent adenosines in the loop of a conserved hairpin near the 3'-end of 16S rRNA in the 30S particle. May play a critical role in biogenesis of 30S subunits.</text>
</comment>
<comment type="subcellular location">
    <subcellularLocation>
        <location evidence="1">Cytoplasm</location>
    </subcellularLocation>
</comment>
<comment type="similarity">
    <text evidence="1">Belongs to the class I-like SAM-binding methyltransferase superfamily. rRNA adenine N(6)-methyltransferase family. RsmA subfamily.</text>
</comment>
<comment type="sequence caution" evidence="2">
    <conflict type="erroneous initiation">
        <sequence resource="EMBL-CDS" id="BAA30942"/>
    </conflict>
</comment>
<name>RSMA_PYRHO</name>
<proteinExistence type="evidence at protein level"/>
<sequence>MRDRLFFLLSKYGIRPRDSIGQHFLIIEDVIEKAIETANVNENDVILEVGPGLGFLTDELAKRAKKVYTIEIDQKIIEILKKEYSWNNVKIIQGDAVRVEWPKFNKVVSNIPYKISSPFTFKLLKTDFERAVVMYQLEFALRMVAKPGSRNYSRLSLMAQALGNVEIVMKIGKGAFYPRPKVDSALVLIEPRKDKIVLNENLVKALFQHRRKTVPRALKDSIHMLGVSKDEIRGIINNVPHSNKRVFQLYPEEVKDIEEYLKKHGIIS</sequence>
<reference key="1">
    <citation type="journal article" date="1998" name="DNA Res.">
        <title>Complete sequence and gene organization of the genome of a hyper-thermophilic archaebacterium, Pyrococcus horikoshii OT3.</title>
        <authorList>
            <person name="Kawarabayasi Y."/>
            <person name="Sawada M."/>
            <person name="Horikawa H."/>
            <person name="Haikawa Y."/>
            <person name="Hino Y."/>
            <person name="Yamamoto S."/>
            <person name="Sekine M."/>
            <person name="Baba S."/>
            <person name="Kosugi H."/>
            <person name="Hosoyama A."/>
            <person name="Nagai Y."/>
            <person name="Sakai M."/>
            <person name="Ogura K."/>
            <person name="Otsuka R."/>
            <person name="Nakazawa H."/>
            <person name="Takamiya M."/>
            <person name="Ohfuku Y."/>
            <person name="Funahashi T."/>
            <person name="Tanaka T."/>
            <person name="Kudoh Y."/>
            <person name="Yamazaki J."/>
            <person name="Kushida N."/>
            <person name="Oguchi A."/>
            <person name="Aoki K."/>
            <person name="Yoshizawa T."/>
            <person name="Nakamura Y."/>
            <person name="Robb F.T."/>
            <person name="Horikoshi K."/>
            <person name="Masuchi Y."/>
            <person name="Shizuya H."/>
            <person name="Kikuchi H."/>
        </authorList>
    </citation>
    <scope>NUCLEOTIDE SEQUENCE [LARGE SCALE GENOMIC DNA]</scope>
    <source>
        <strain>ATCC 700860 / DSM 12428 / JCM 9974 / NBRC 100139 / OT-3</strain>
    </source>
</reference>
<keyword id="KW-0002">3D-structure</keyword>
<keyword id="KW-0963">Cytoplasm</keyword>
<keyword id="KW-0489">Methyltransferase</keyword>
<keyword id="KW-0694">RNA-binding</keyword>
<keyword id="KW-0698">rRNA processing</keyword>
<keyword id="KW-0949">S-adenosyl-L-methionine</keyword>
<keyword id="KW-0808">Transferase</keyword>
<dbReference type="EC" id="2.1.1.-" evidence="1"/>
<dbReference type="EMBL" id="BA000001">
    <property type="protein sequence ID" value="BAA30942.1"/>
    <property type="status" value="ALT_INIT"/>
    <property type="molecule type" value="Genomic_DNA"/>
</dbReference>
<dbReference type="PIR" id="G71193">
    <property type="entry name" value="G71193"/>
</dbReference>
<dbReference type="RefSeq" id="WP_048053485.1">
    <property type="nucleotide sequence ID" value="NC_000961.1"/>
</dbReference>
<dbReference type="PDB" id="8X3W">
    <property type="method" value="X-ray"/>
    <property type="resolution" value="2.01 A"/>
    <property type="chains" value="A/B=1-268"/>
</dbReference>
<dbReference type="PDB" id="8X41">
    <property type="method" value="X-ray"/>
    <property type="resolution" value="2.35 A"/>
    <property type="chains" value="A/B=1-268"/>
</dbReference>
<dbReference type="PDB" id="8X44">
    <property type="method" value="X-ray"/>
    <property type="resolution" value="2.60 A"/>
    <property type="chains" value="A/B=1-268"/>
</dbReference>
<dbReference type="PDB" id="8X45">
    <property type="method" value="X-ray"/>
    <property type="resolution" value="2.50 A"/>
    <property type="chains" value="A/B=1-268"/>
</dbReference>
<dbReference type="PDB" id="8X46">
    <property type="method" value="X-ray"/>
    <property type="resolution" value="2.20 A"/>
    <property type="chains" value="A/B=1-268"/>
</dbReference>
<dbReference type="PDB" id="8X47">
    <property type="method" value="X-ray"/>
    <property type="resolution" value="2.80 A"/>
    <property type="chains" value="A=1-268"/>
</dbReference>
<dbReference type="PDB" id="8X4G">
    <property type="method" value="X-ray"/>
    <property type="resolution" value="3.30 A"/>
    <property type="chains" value="A/B=1-268"/>
</dbReference>
<dbReference type="PDB" id="8X4I">
    <property type="method" value="X-ray"/>
    <property type="resolution" value="3.30 A"/>
    <property type="chains" value="A=1-268"/>
</dbReference>
<dbReference type="PDB" id="8X4L">
    <property type="method" value="X-ray"/>
    <property type="resolution" value="2.60 A"/>
    <property type="chains" value="A/B=1-268"/>
</dbReference>
<dbReference type="PDB" id="8X4O">
    <property type="method" value="X-ray"/>
    <property type="resolution" value="3.00 A"/>
    <property type="chains" value="A/B=1-268"/>
</dbReference>
<dbReference type="PDB" id="8X4P">
    <property type="method" value="X-ray"/>
    <property type="resolution" value="2.60 A"/>
    <property type="chains" value="A/B=1-268"/>
</dbReference>
<dbReference type="PDBsum" id="8X3W"/>
<dbReference type="PDBsum" id="8X41"/>
<dbReference type="PDBsum" id="8X44"/>
<dbReference type="PDBsum" id="8X45"/>
<dbReference type="PDBsum" id="8X46"/>
<dbReference type="PDBsum" id="8X47"/>
<dbReference type="PDBsum" id="8X4G"/>
<dbReference type="PDBsum" id="8X4I"/>
<dbReference type="PDBsum" id="8X4L"/>
<dbReference type="PDBsum" id="8X4O"/>
<dbReference type="PDBsum" id="8X4P"/>
<dbReference type="SMR" id="O59487"/>
<dbReference type="STRING" id="70601.gene:9378825"/>
<dbReference type="EnsemblBacteria" id="BAA30942">
    <property type="protein sequence ID" value="BAA30942"/>
    <property type="gene ID" value="BAA30942"/>
</dbReference>
<dbReference type="GeneID" id="1442664"/>
<dbReference type="KEGG" id="pho:PH1823"/>
<dbReference type="eggNOG" id="arCOG04131">
    <property type="taxonomic scope" value="Archaea"/>
</dbReference>
<dbReference type="OrthoDB" id="9883at2157"/>
<dbReference type="Proteomes" id="UP000000752">
    <property type="component" value="Chromosome"/>
</dbReference>
<dbReference type="GO" id="GO:0005737">
    <property type="term" value="C:cytoplasm"/>
    <property type="evidence" value="ECO:0007669"/>
    <property type="project" value="UniProtKB-SubCell"/>
</dbReference>
<dbReference type="GO" id="GO:0003723">
    <property type="term" value="F:RNA binding"/>
    <property type="evidence" value="ECO:0007669"/>
    <property type="project" value="UniProtKB-KW"/>
</dbReference>
<dbReference type="GO" id="GO:0000179">
    <property type="term" value="F:rRNA (adenine-N6,N6-)-dimethyltransferase activity"/>
    <property type="evidence" value="ECO:0007669"/>
    <property type="project" value="InterPro"/>
</dbReference>
<dbReference type="CDD" id="cd02440">
    <property type="entry name" value="AdoMet_MTases"/>
    <property type="match status" value="1"/>
</dbReference>
<dbReference type="FunFam" id="3.40.50.150:FF:000023">
    <property type="entry name" value="Ribosomal RNA small subunit methyltransferase A"/>
    <property type="match status" value="1"/>
</dbReference>
<dbReference type="Gene3D" id="1.10.8.100">
    <property type="entry name" value="Ribosomal RNA adenine dimethylase-like, domain 2"/>
    <property type="match status" value="1"/>
</dbReference>
<dbReference type="Gene3D" id="3.40.50.150">
    <property type="entry name" value="Vaccinia Virus protein VP39"/>
    <property type="match status" value="1"/>
</dbReference>
<dbReference type="HAMAP" id="MF_00607">
    <property type="entry name" value="16SrRNA_methyltr_A"/>
    <property type="match status" value="1"/>
</dbReference>
<dbReference type="InterPro" id="IPR001737">
    <property type="entry name" value="KsgA/Erm"/>
</dbReference>
<dbReference type="InterPro" id="IPR023165">
    <property type="entry name" value="rRNA_Ade_diMease-like_C"/>
</dbReference>
<dbReference type="InterPro" id="IPR020596">
    <property type="entry name" value="rRNA_Ade_Mease_Trfase_CS"/>
</dbReference>
<dbReference type="InterPro" id="IPR020598">
    <property type="entry name" value="rRNA_Ade_methylase_Trfase_N"/>
</dbReference>
<dbReference type="InterPro" id="IPR011530">
    <property type="entry name" value="rRNA_adenine_dimethylase"/>
</dbReference>
<dbReference type="InterPro" id="IPR029063">
    <property type="entry name" value="SAM-dependent_MTases_sf"/>
</dbReference>
<dbReference type="NCBIfam" id="TIGR00755">
    <property type="entry name" value="ksgA"/>
    <property type="match status" value="1"/>
</dbReference>
<dbReference type="PANTHER" id="PTHR11727">
    <property type="entry name" value="DIMETHYLADENOSINE TRANSFERASE"/>
    <property type="match status" value="1"/>
</dbReference>
<dbReference type="PANTHER" id="PTHR11727:SF7">
    <property type="entry name" value="DIMETHYLADENOSINE TRANSFERASE-RELATED"/>
    <property type="match status" value="1"/>
</dbReference>
<dbReference type="Pfam" id="PF00398">
    <property type="entry name" value="RrnaAD"/>
    <property type="match status" value="1"/>
</dbReference>
<dbReference type="SMART" id="SM00650">
    <property type="entry name" value="rADc"/>
    <property type="match status" value="1"/>
</dbReference>
<dbReference type="SUPFAM" id="SSF53335">
    <property type="entry name" value="S-adenosyl-L-methionine-dependent methyltransferases"/>
    <property type="match status" value="1"/>
</dbReference>
<dbReference type="PROSITE" id="PS01131">
    <property type="entry name" value="RRNA_A_DIMETH"/>
    <property type="match status" value="1"/>
</dbReference>
<dbReference type="PROSITE" id="PS51689">
    <property type="entry name" value="SAM_RNA_A_N6_MT"/>
    <property type="match status" value="1"/>
</dbReference>